<feature type="chain" id="PRO_0000124441" description="Small ribosomal subunit protein uS7c">
    <location>
        <begin position="1"/>
        <end position="155"/>
    </location>
</feature>
<geneLocation type="chloroplast"/>
<proteinExistence type="inferred from homology"/>
<protein>
    <recommendedName>
        <fullName evidence="2">Small ribosomal subunit protein uS7c</fullName>
    </recommendedName>
    <alternativeName>
        <fullName>30S ribosomal protein S7, chloroplastic</fullName>
    </alternativeName>
</protein>
<gene>
    <name type="primary">rps7</name>
</gene>
<name>RR7_CERJA</name>
<reference key="1">
    <citation type="journal article" date="2000" name="Am. J. Bot.">
        <title>Utility of 17 chloroplast genes for inferring the phylogeny of the basal angiosperms.</title>
        <authorList>
            <person name="Graham S.W."/>
            <person name="Olmstead R.G."/>
        </authorList>
    </citation>
    <scope>NUCLEOTIDE SEQUENCE [GENOMIC DNA]</scope>
</reference>
<organism>
    <name type="scientific">Cercidiphyllum japonicum</name>
    <name type="common">Katsura tree</name>
    <dbReference type="NCBI Taxonomy" id="13413"/>
    <lineage>
        <taxon>Eukaryota</taxon>
        <taxon>Viridiplantae</taxon>
        <taxon>Streptophyta</taxon>
        <taxon>Embryophyta</taxon>
        <taxon>Tracheophyta</taxon>
        <taxon>Spermatophyta</taxon>
        <taxon>Magnoliopsida</taxon>
        <taxon>eudicotyledons</taxon>
        <taxon>Gunneridae</taxon>
        <taxon>Pentapetalae</taxon>
        <taxon>Saxifragales</taxon>
        <taxon>Cercidiphyllaceae</taxon>
        <taxon>Cercidiphyllum</taxon>
    </lineage>
</organism>
<evidence type="ECO:0000250" key="1"/>
<evidence type="ECO:0000305" key="2"/>
<dbReference type="EMBL" id="AF123776">
    <property type="protein sequence ID" value="AAG26107.1"/>
    <property type="molecule type" value="Genomic_DNA"/>
</dbReference>
<dbReference type="RefSeq" id="YP_009493248.1">
    <property type="nucleotide sequence ID" value="NC_037940.1"/>
</dbReference>
<dbReference type="RefSeq" id="YP_009493318.1">
    <property type="nucleotide sequence ID" value="NC_037940.1"/>
</dbReference>
<dbReference type="SMR" id="P69663"/>
<dbReference type="GeneID" id="36953493"/>
<dbReference type="GeneID" id="36953589"/>
<dbReference type="GO" id="GO:0009507">
    <property type="term" value="C:chloroplast"/>
    <property type="evidence" value="ECO:0007669"/>
    <property type="project" value="UniProtKB-SubCell"/>
</dbReference>
<dbReference type="GO" id="GO:0015935">
    <property type="term" value="C:small ribosomal subunit"/>
    <property type="evidence" value="ECO:0007669"/>
    <property type="project" value="InterPro"/>
</dbReference>
<dbReference type="GO" id="GO:0019843">
    <property type="term" value="F:rRNA binding"/>
    <property type="evidence" value="ECO:0007669"/>
    <property type="project" value="UniProtKB-UniRule"/>
</dbReference>
<dbReference type="GO" id="GO:0003735">
    <property type="term" value="F:structural constituent of ribosome"/>
    <property type="evidence" value="ECO:0007669"/>
    <property type="project" value="InterPro"/>
</dbReference>
<dbReference type="GO" id="GO:0006412">
    <property type="term" value="P:translation"/>
    <property type="evidence" value="ECO:0007669"/>
    <property type="project" value="UniProtKB-UniRule"/>
</dbReference>
<dbReference type="CDD" id="cd14871">
    <property type="entry name" value="uS7_Chloroplast"/>
    <property type="match status" value="1"/>
</dbReference>
<dbReference type="FunFam" id="1.10.455.10:FF:000001">
    <property type="entry name" value="30S ribosomal protein S7"/>
    <property type="match status" value="1"/>
</dbReference>
<dbReference type="Gene3D" id="1.10.455.10">
    <property type="entry name" value="Ribosomal protein S7 domain"/>
    <property type="match status" value="1"/>
</dbReference>
<dbReference type="HAMAP" id="MF_00480_B">
    <property type="entry name" value="Ribosomal_uS7_B"/>
    <property type="match status" value="1"/>
</dbReference>
<dbReference type="InterPro" id="IPR000235">
    <property type="entry name" value="Ribosomal_uS7"/>
</dbReference>
<dbReference type="InterPro" id="IPR005717">
    <property type="entry name" value="Ribosomal_uS7_bac/org-type"/>
</dbReference>
<dbReference type="InterPro" id="IPR020606">
    <property type="entry name" value="Ribosomal_uS7_CS"/>
</dbReference>
<dbReference type="InterPro" id="IPR023798">
    <property type="entry name" value="Ribosomal_uS7_dom"/>
</dbReference>
<dbReference type="InterPro" id="IPR036823">
    <property type="entry name" value="Ribosomal_uS7_dom_sf"/>
</dbReference>
<dbReference type="NCBIfam" id="TIGR01029">
    <property type="entry name" value="rpsG_bact"/>
    <property type="match status" value="1"/>
</dbReference>
<dbReference type="PANTHER" id="PTHR11205">
    <property type="entry name" value="RIBOSOMAL PROTEIN S7"/>
    <property type="match status" value="1"/>
</dbReference>
<dbReference type="Pfam" id="PF00177">
    <property type="entry name" value="Ribosomal_S7"/>
    <property type="match status" value="1"/>
</dbReference>
<dbReference type="PIRSF" id="PIRSF002122">
    <property type="entry name" value="RPS7p_RPS7a_RPS5e_RPS7o"/>
    <property type="match status" value="1"/>
</dbReference>
<dbReference type="SUPFAM" id="SSF47973">
    <property type="entry name" value="Ribosomal protein S7"/>
    <property type="match status" value="1"/>
</dbReference>
<dbReference type="PROSITE" id="PS00052">
    <property type="entry name" value="RIBOSOMAL_S7"/>
    <property type="match status" value="1"/>
</dbReference>
<comment type="function">
    <text evidence="1">One of the primary rRNA binding proteins, it binds directly to 16S rRNA where it nucleates assembly of the head domain of the 30S subunit.</text>
</comment>
<comment type="subunit">
    <text>Part of the 30S ribosomal subunit.</text>
</comment>
<comment type="subcellular location">
    <subcellularLocation>
        <location>Plastid</location>
        <location>Chloroplast</location>
    </subcellularLocation>
</comment>
<comment type="similarity">
    <text evidence="2">Belongs to the universal ribosomal protein uS7 family.</text>
</comment>
<sequence>MSRRGTAEEKTAKSDPIYRNRLVNMLVNRILKHGKKSLAYQIIYRAVKKIQQKTETNPLSVLRQAIRGVTPDIAVKARRVGGSTHQVPIEIGSTQGKALAIRWLLGASRKRPGRNMAFKLSSELVDAAKGSGDAIRKKEETHRMAEANRAFAHFR</sequence>
<keyword id="KW-0150">Chloroplast</keyword>
<keyword id="KW-0934">Plastid</keyword>
<keyword id="KW-0687">Ribonucleoprotein</keyword>
<keyword id="KW-0689">Ribosomal protein</keyword>
<keyword id="KW-0694">RNA-binding</keyword>
<keyword id="KW-0699">rRNA-binding</keyword>
<accession>P69663</accession>
<accession>Q9G1K2</accession>